<evidence type="ECO:0000255" key="1">
    <source>
        <dbReference type="HAMAP-Rule" id="MF_00420"/>
    </source>
</evidence>
<evidence type="ECO:0000256" key="2">
    <source>
        <dbReference type="SAM" id="MobiDB-lite"/>
    </source>
</evidence>
<gene>
    <name evidence="1" type="primary">purL</name>
    <name type="ordered locus">Hlac_0471</name>
</gene>
<proteinExistence type="inferred from homology"/>
<accession>B9LT08</accession>
<name>PURL_HALLT</name>
<sequence>MSLSEPDHELVVAELGREPTAAEVALFENLWSEHCAYRSSRPLLSAFESEGDQVVVGPGDDAAVLALPEPDAADTPAAERDADDYGDQYVTFGVESHNHPSFVDPVDGAATGVGGIVRDTMSMGAYPIALLDSLYFGGFDRERSRYLFEGVVEGISHYGNCIGVPTVGGSVAFHDGYEGNPLVNVACVGLTNEDRLVTATAQEPGNTLMLVGNGTGRDGLGGASFASEDLAEDAETEDRPAVQVGDPYAEKRLIECNEALVDEDLVLSARDLGAAGLGGASSELVAKGGLGARLDLDSVHQREPNMNAMEILLAESQERMCYEVAPEDVARVEALAERFDLGCSVIGEVTDGNYVCEFAGAGKGEDDADDSDAESEVVVDVDAEYLADGAPMNDLASESPTQPDRDLPDPEPSLDEAVESVVSAPSTASKRWVYRQYDHEVGVRTAMKPGDDAAIMAIRETASTDAADLAPADQGVGLALSSGANPNWTETDPYEGARAVALENATNLAAKGAVPLAAVDCLNGGNPEKPEVYGGFKGIVDGLADACADLDAPVVGGNVSLYNDSVEGPIPPTPTLALIGTRKGYNAPPAALDADSAGDSELLLIGAGGADGGALGGSEYLAQAGGTDRFPTLPDTETKSLADRVASLAAVARHESTFATHDVSDGGLAVALAELVTDAAGADVTLPDRVAVFEETPGRLVVQTTDPEAVAELAGELPVLRLGEVTTDGALSLSVGDDETAFDADTIRELRGVIDRELA</sequence>
<keyword id="KW-0067">ATP-binding</keyword>
<keyword id="KW-0963">Cytoplasm</keyword>
<keyword id="KW-0436">Ligase</keyword>
<keyword id="KW-0460">Magnesium</keyword>
<keyword id="KW-0479">Metal-binding</keyword>
<keyword id="KW-0547">Nucleotide-binding</keyword>
<keyword id="KW-0658">Purine biosynthesis</keyword>
<keyword id="KW-1185">Reference proteome</keyword>
<comment type="function">
    <text evidence="1">Part of the phosphoribosylformylglycinamidine synthase complex involved in the purines biosynthetic pathway. Catalyzes the ATP-dependent conversion of formylglycinamide ribonucleotide (FGAR) and glutamine to yield formylglycinamidine ribonucleotide (FGAM) and glutamate. The FGAM synthase complex is composed of three subunits. PurQ produces an ammonia molecule by converting glutamine to glutamate. PurL transfers the ammonia molecule to FGAR to form FGAM in an ATP-dependent manner. PurS interacts with PurQ and PurL and is thought to assist in the transfer of the ammonia molecule from PurQ to PurL.</text>
</comment>
<comment type="catalytic activity">
    <reaction evidence="1">
        <text>N(2)-formyl-N(1)-(5-phospho-beta-D-ribosyl)glycinamide + L-glutamine + ATP + H2O = 2-formamido-N(1)-(5-O-phospho-beta-D-ribosyl)acetamidine + L-glutamate + ADP + phosphate + H(+)</text>
        <dbReference type="Rhea" id="RHEA:17129"/>
        <dbReference type="ChEBI" id="CHEBI:15377"/>
        <dbReference type="ChEBI" id="CHEBI:15378"/>
        <dbReference type="ChEBI" id="CHEBI:29985"/>
        <dbReference type="ChEBI" id="CHEBI:30616"/>
        <dbReference type="ChEBI" id="CHEBI:43474"/>
        <dbReference type="ChEBI" id="CHEBI:58359"/>
        <dbReference type="ChEBI" id="CHEBI:147286"/>
        <dbReference type="ChEBI" id="CHEBI:147287"/>
        <dbReference type="ChEBI" id="CHEBI:456216"/>
        <dbReference type="EC" id="6.3.5.3"/>
    </reaction>
</comment>
<comment type="pathway">
    <text evidence="1">Purine metabolism; IMP biosynthesis via de novo pathway; 5-amino-1-(5-phospho-D-ribosyl)imidazole from N(2)-formyl-N(1)-(5-phospho-D-ribosyl)glycinamide: step 1/2.</text>
</comment>
<comment type="subunit">
    <text evidence="1">Monomer. Part of the FGAM synthase complex composed of 1 PurL, 1 PurQ and 2 PurS subunits.</text>
</comment>
<comment type="subcellular location">
    <subcellularLocation>
        <location evidence="1">Cytoplasm</location>
    </subcellularLocation>
</comment>
<comment type="similarity">
    <text evidence="1">Belongs to the FGAMS family.</text>
</comment>
<dbReference type="EC" id="6.3.5.3" evidence="1"/>
<dbReference type="EMBL" id="CP001365">
    <property type="protein sequence ID" value="ACM56073.1"/>
    <property type="molecule type" value="Genomic_DNA"/>
</dbReference>
<dbReference type="RefSeq" id="WP_012659708.1">
    <property type="nucleotide sequence ID" value="NC_012029.1"/>
</dbReference>
<dbReference type="SMR" id="B9LT08"/>
<dbReference type="GeneID" id="7400351"/>
<dbReference type="KEGG" id="hla:Hlac_0471"/>
<dbReference type="eggNOG" id="arCOG00641">
    <property type="taxonomic scope" value="Archaea"/>
</dbReference>
<dbReference type="HOGENOM" id="CLU_003100_0_1_2"/>
<dbReference type="UniPathway" id="UPA00074">
    <property type="reaction ID" value="UER00128"/>
</dbReference>
<dbReference type="Proteomes" id="UP000000740">
    <property type="component" value="Chromosome 1"/>
</dbReference>
<dbReference type="GO" id="GO:0005737">
    <property type="term" value="C:cytoplasm"/>
    <property type="evidence" value="ECO:0007669"/>
    <property type="project" value="UniProtKB-SubCell"/>
</dbReference>
<dbReference type="GO" id="GO:0005524">
    <property type="term" value="F:ATP binding"/>
    <property type="evidence" value="ECO:0007669"/>
    <property type="project" value="UniProtKB-UniRule"/>
</dbReference>
<dbReference type="GO" id="GO:0000287">
    <property type="term" value="F:magnesium ion binding"/>
    <property type="evidence" value="ECO:0007669"/>
    <property type="project" value="UniProtKB-UniRule"/>
</dbReference>
<dbReference type="GO" id="GO:0004642">
    <property type="term" value="F:phosphoribosylformylglycinamidine synthase activity"/>
    <property type="evidence" value="ECO:0007669"/>
    <property type="project" value="UniProtKB-UniRule"/>
</dbReference>
<dbReference type="GO" id="GO:0006189">
    <property type="term" value="P:'de novo' IMP biosynthetic process"/>
    <property type="evidence" value="ECO:0007669"/>
    <property type="project" value="UniProtKB-UniRule"/>
</dbReference>
<dbReference type="CDD" id="cd02203">
    <property type="entry name" value="PurL_repeat1"/>
    <property type="match status" value="1"/>
</dbReference>
<dbReference type="CDD" id="cd02204">
    <property type="entry name" value="PurL_repeat2"/>
    <property type="match status" value="1"/>
</dbReference>
<dbReference type="Gene3D" id="3.90.650.10">
    <property type="entry name" value="PurM-like C-terminal domain"/>
    <property type="match status" value="2"/>
</dbReference>
<dbReference type="Gene3D" id="3.30.1330.10">
    <property type="entry name" value="PurM-like, N-terminal domain"/>
    <property type="match status" value="2"/>
</dbReference>
<dbReference type="HAMAP" id="MF_00420">
    <property type="entry name" value="PurL_2"/>
    <property type="match status" value="1"/>
</dbReference>
<dbReference type="InterPro" id="IPR010074">
    <property type="entry name" value="PRibForGlyAmidine_synth_PurL"/>
</dbReference>
<dbReference type="InterPro" id="IPR041609">
    <property type="entry name" value="PurL_linker"/>
</dbReference>
<dbReference type="InterPro" id="IPR010918">
    <property type="entry name" value="PurM-like_C_dom"/>
</dbReference>
<dbReference type="InterPro" id="IPR036676">
    <property type="entry name" value="PurM-like_C_sf"/>
</dbReference>
<dbReference type="InterPro" id="IPR016188">
    <property type="entry name" value="PurM-like_N"/>
</dbReference>
<dbReference type="InterPro" id="IPR036921">
    <property type="entry name" value="PurM-like_N_sf"/>
</dbReference>
<dbReference type="NCBIfam" id="TIGR01736">
    <property type="entry name" value="FGAM_synth_II"/>
    <property type="match status" value="1"/>
</dbReference>
<dbReference type="NCBIfam" id="NF002290">
    <property type="entry name" value="PRK01213.1"/>
    <property type="match status" value="1"/>
</dbReference>
<dbReference type="PANTHER" id="PTHR43555">
    <property type="entry name" value="PHOSPHORIBOSYLFORMYLGLYCINAMIDINE SYNTHASE SUBUNIT PURL"/>
    <property type="match status" value="1"/>
</dbReference>
<dbReference type="PANTHER" id="PTHR43555:SF1">
    <property type="entry name" value="PHOSPHORIBOSYLFORMYLGLYCINAMIDINE SYNTHASE SUBUNIT PURL"/>
    <property type="match status" value="1"/>
</dbReference>
<dbReference type="Pfam" id="PF00586">
    <property type="entry name" value="AIRS"/>
    <property type="match status" value="2"/>
</dbReference>
<dbReference type="Pfam" id="PF02769">
    <property type="entry name" value="AIRS_C"/>
    <property type="match status" value="2"/>
</dbReference>
<dbReference type="Pfam" id="PF18072">
    <property type="entry name" value="FGAR-AT_linker"/>
    <property type="match status" value="1"/>
</dbReference>
<dbReference type="PIRSF" id="PIRSF001587">
    <property type="entry name" value="FGAM_synthase_II"/>
    <property type="match status" value="1"/>
</dbReference>
<dbReference type="SUPFAM" id="SSF56042">
    <property type="entry name" value="PurM C-terminal domain-like"/>
    <property type="match status" value="2"/>
</dbReference>
<dbReference type="SUPFAM" id="SSF55326">
    <property type="entry name" value="PurM N-terminal domain-like"/>
    <property type="match status" value="2"/>
</dbReference>
<organism>
    <name type="scientific">Halorubrum lacusprofundi (strain ATCC 49239 / DSM 5036 / JCM 8891 / ACAM 34)</name>
    <dbReference type="NCBI Taxonomy" id="416348"/>
    <lineage>
        <taxon>Archaea</taxon>
        <taxon>Methanobacteriati</taxon>
        <taxon>Methanobacteriota</taxon>
        <taxon>Stenosarchaea group</taxon>
        <taxon>Halobacteria</taxon>
        <taxon>Halobacteriales</taxon>
        <taxon>Haloferacaceae</taxon>
        <taxon>Halorubrum</taxon>
    </lineage>
</organism>
<feature type="chain" id="PRO_1000134899" description="Phosphoribosylformylglycinamidine synthase subunit PurL">
    <location>
        <begin position="1"/>
        <end position="759"/>
    </location>
</feature>
<feature type="region of interest" description="Disordered" evidence="2">
    <location>
        <begin position="388"/>
        <end position="422"/>
    </location>
</feature>
<feature type="active site" evidence="1">
    <location>
        <position position="34"/>
    </location>
</feature>
<feature type="active site" description="Proton acceptor" evidence="1">
    <location>
        <position position="97"/>
    </location>
</feature>
<feature type="binding site" evidence="1">
    <location>
        <position position="37"/>
    </location>
    <ligand>
        <name>ATP</name>
        <dbReference type="ChEBI" id="CHEBI:30616"/>
    </ligand>
</feature>
<feature type="binding site" evidence="1">
    <location>
        <position position="95"/>
    </location>
    <ligand>
        <name>Mg(2+)</name>
        <dbReference type="ChEBI" id="CHEBI:18420"/>
        <label>1</label>
    </ligand>
</feature>
<feature type="binding site" evidence="1">
    <location>
        <begin position="96"/>
        <end position="99"/>
    </location>
    <ligand>
        <name>substrate</name>
    </ligand>
</feature>
<feature type="binding site" evidence="1">
    <location>
        <position position="118"/>
    </location>
    <ligand>
        <name>substrate</name>
    </ligand>
</feature>
<feature type="binding site" evidence="1">
    <location>
        <position position="119"/>
    </location>
    <ligand>
        <name>Mg(2+)</name>
        <dbReference type="ChEBI" id="CHEBI:18420"/>
        <label>2</label>
    </ligand>
</feature>
<feature type="binding site" evidence="1">
    <location>
        <position position="243"/>
    </location>
    <ligand>
        <name>substrate</name>
    </ligand>
</feature>
<feature type="binding site" evidence="1">
    <location>
        <position position="271"/>
    </location>
    <ligand>
        <name>Mg(2+)</name>
        <dbReference type="ChEBI" id="CHEBI:18420"/>
        <label>2</label>
    </ligand>
</feature>
<feature type="binding site" evidence="1">
    <location>
        <begin position="315"/>
        <end position="317"/>
    </location>
    <ligand>
        <name>substrate</name>
    </ligand>
</feature>
<feature type="binding site" evidence="1">
    <location>
        <position position="520"/>
    </location>
    <ligand>
        <name>ATP</name>
        <dbReference type="ChEBI" id="CHEBI:30616"/>
    </ligand>
</feature>
<feature type="binding site" evidence="1">
    <location>
        <position position="557"/>
    </location>
    <ligand>
        <name>ATP</name>
        <dbReference type="ChEBI" id="CHEBI:30616"/>
    </ligand>
</feature>
<feature type="binding site" evidence="1">
    <location>
        <position position="558"/>
    </location>
    <ligand>
        <name>Mg(2+)</name>
        <dbReference type="ChEBI" id="CHEBI:18420"/>
        <label>1</label>
    </ligand>
</feature>
<feature type="binding site" evidence="1">
    <location>
        <position position="560"/>
    </location>
    <ligand>
        <name>substrate</name>
    </ligand>
</feature>
<protein>
    <recommendedName>
        <fullName evidence="1">Phosphoribosylformylglycinamidine synthase subunit PurL</fullName>
        <shortName evidence="1">FGAM synthase</shortName>
        <ecNumber evidence="1">6.3.5.3</ecNumber>
    </recommendedName>
    <alternativeName>
        <fullName evidence="1">Formylglycinamide ribonucleotide amidotransferase subunit II</fullName>
        <shortName evidence="1">FGAR amidotransferase II</shortName>
        <shortName evidence="1">FGAR-AT II</shortName>
    </alternativeName>
    <alternativeName>
        <fullName evidence="1">Glutamine amidotransferase PurL</fullName>
    </alternativeName>
    <alternativeName>
        <fullName evidence="1">Phosphoribosylformylglycinamidine synthase subunit II</fullName>
    </alternativeName>
</protein>
<reference key="1">
    <citation type="journal article" date="2016" name="Stand. Genomic Sci.">
        <title>Complete genome sequence of the Antarctic Halorubrum lacusprofundi type strain ACAM 34.</title>
        <authorList>
            <person name="Anderson I.J."/>
            <person name="DasSarma P."/>
            <person name="Lucas S."/>
            <person name="Copeland A."/>
            <person name="Lapidus A."/>
            <person name="Del Rio T.G."/>
            <person name="Tice H."/>
            <person name="Dalin E."/>
            <person name="Bruce D.C."/>
            <person name="Goodwin L."/>
            <person name="Pitluck S."/>
            <person name="Sims D."/>
            <person name="Brettin T.S."/>
            <person name="Detter J.C."/>
            <person name="Han C.S."/>
            <person name="Larimer F."/>
            <person name="Hauser L."/>
            <person name="Land M."/>
            <person name="Ivanova N."/>
            <person name="Richardson P."/>
            <person name="Cavicchioli R."/>
            <person name="DasSarma S."/>
            <person name="Woese C.R."/>
            <person name="Kyrpides N.C."/>
        </authorList>
    </citation>
    <scope>NUCLEOTIDE SEQUENCE [LARGE SCALE GENOMIC DNA]</scope>
    <source>
        <strain>ATCC 49239 / DSM 5036 / JCM 8891 / ACAM 34</strain>
    </source>
</reference>